<gene>
    <name evidence="1" type="primary">tig</name>
    <name type="ordered locus">RBE_1363</name>
</gene>
<dbReference type="EC" id="5.2.1.8" evidence="1"/>
<dbReference type="EMBL" id="CP000087">
    <property type="protein sequence ID" value="ABE05444.1"/>
    <property type="molecule type" value="Genomic_DNA"/>
</dbReference>
<dbReference type="RefSeq" id="WP_011478013.1">
    <property type="nucleotide sequence ID" value="NC_007940.1"/>
</dbReference>
<dbReference type="SMR" id="Q1RGS0"/>
<dbReference type="KEGG" id="rbe:RBE_1363"/>
<dbReference type="eggNOG" id="COG0544">
    <property type="taxonomic scope" value="Bacteria"/>
</dbReference>
<dbReference type="HOGENOM" id="CLU_033058_2_2_5"/>
<dbReference type="OrthoDB" id="9767721at2"/>
<dbReference type="Proteomes" id="UP000001951">
    <property type="component" value="Chromosome"/>
</dbReference>
<dbReference type="GO" id="GO:0005737">
    <property type="term" value="C:cytoplasm"/>
    <property type="evidence" value="ECO:0007669"/>
    <property type="project" value="UniProtKB-SubCell"/>
</dbReference>
<dbReference type="GO" id="GO:0003755">
    <property type="term" value="F:peptidyl-prolyl cis-trans isomerase activity"/>
    <property type="evidence" value="ECO:0007669"/>
    <property type="project" value="UniProtKB-UniRule"/>
</dbReference>
<dbReference type="GO" id="GO:0044183">
    <property type="term" value="F:protein folding chaperone"/>
    <property type="evidence" value="ECO:0007669"/>
    <property type="project" value="TreeGrafter"/>
</dbReference>
<dbReference type="GO" id="GO:0043022">
    <property type="term" value="F:ribosome binding"/>
    <property type="evidence" value="ECO:0007669"/>
    <property type="project" value="TreeGrafter"/>
</dbReference>
<dbReference type="GO" id="GO:0051083">
    <property type="term" value="P:'de novo' cotranslational protein folding"/>
    <property type="evidence" value="ECO:0007669"/>
    <property type="project" value="TreeGrafter"/>
</dbReference>
<dbReference type="GO" id="GO:0051301">
    <property type="term" value="P:cell division"/>
    <property type="evidence" value="ECO:0007669"/>
    <property type="project" value="UniProtKB-KW"/>
</dbReference>
<dbReference type="GO" id="GO:0061077">
    <property type="term" value="P:chaperone-mediated protein folding"/>
    <property type="evidence" value="ECO:0007669"/>
    <property type="project" value="TreeGrafter"/>
</dbReference>
<dbReference type="GO" id="GO:0015031">
    <property type="term" value="P:protein transport"/>
    <property type="evidence" value="ECO:0007669"/>
    <property type="project" value="UniProtKB-UniRule"/>
</dbReference>
<dbReference type="GO" id="GO:0043335">
    <property type="term" value="P:protein unfolding"/>
    <property type="evidence" value="ECO:0007669"/>
    <property type="project" value="TreeGrafter"/>
</dbReference>
<dbReference type="FunFam" id="3.10.50.40:FF:000001">
    <property type="entry name" value="Trigger factor"/>
    <property type="match status" value="1"/>
</dbReference>
<dbReference type="Gene3D" id="3.10.50.40">
    <property type="match status" value="1"/>
</dbReference>
<dbReference type="Gene3D" id="3.30.70.1050">
    <property type="entry name" value="Trigger factor ribosome-binding domain"/>
    <property type="match status" value="1"/>
</dbReference>
<dbReference type="Gene3D" id="1.10.3120.10">
    <property type="entry name" value="Trigger factor, C-terminal domain"/>
    <property type="match status" value="1"/>
</dbReference>
<dbReference type="HAMAP" id="MF_00303">
    <property type="entry name" value="Trigger_factor_Tig"/>
    <property type="match status" value="1"/>
</dbReference>
<dbReference type="InterPro" id="IPR046357">
    <property type="entry name" value="PPIase_dom_sf"/>
</dbReference>
<dbReference type="InterPro" id="IPR001179">
    <property type="entry name" value="PPIase_FKBP_dom"/>
</dbReference>
<dbReference type="InterPro" id="IPR005215">
    <property type="entry name" value="Trig_fac"/>
</dbReference>
<dbReference type="InterPro" id="IPR008880">
    <property type="entry name" value="Trigger_fac_C"/>
</dbReference>
<dbReference type="InterPro" id="IPR037041">
    <property type="entry name" value="Trigger_fac_C_sf"/>
</dbReference>
<dbReference type="InterPro" id="IPR008881">
    <property type="entry name" value="Trigger_fac_ribosome-bd_bac"/>
</dbReference>
<dbReference type="InterPro" id="IPR036611">
    <property type="entry name" value="Trigger_fac_ribosome-bd_sf"/>
</dbReference>
<dbReference type="InterPro" id="IPR027304">
    <property type="entry name" value="Trigger_fact/SurA_dom_sf"/>
</dbReference>
<dbReference type="NCBIfam" id="TIGR00115">
    <property type="entry name" value="tig"/>
    <property type="match status" value="1"/>
</dbReference>
<dbReference type="PANTHER" id="PTHR30560">
    <property type="entry name" value="TRIGGER FACTOR CHAPERONE AND PEPTIDYL-PROLYL CIS/TRANS ISOMERASE"/>
    <property type="match status" value="1"/>
</dbReference>
<dbReference type="PANTHER" id="PTHR30560:SF3">
    <property type="entry name" value="TRIGGER FACTOR-LIKE PROTEIN TIG, CHLOROPLASTIC"/>
    <property type="match status" value="1"/>
</dbReference>
<dbReference type="Pfam" id="PF00254">
    <property type="entry name" value="FKBP_C"/>
    <property type="match status" value="1"/>
</dbReference>
<dbReference type="Pfam" id="PF05698">
    <property type="entry name" value="Trigger_C"/>
    <property type="match status" value="1"/>
</dbReference>
<dbReference type="Pfam" id="PF05697">
    <property type="entry name" value="Trigger_N"/>
    <property type="match status" value="1"/>
</dbReference>
<dbReference type="PIRSF" id="PIRSF003095">
    <property type="entry name" value="Trigger_factor"/>
    <property type="match status" value="1"/>
</dbReference>
<dbReference type="SUPFAM" id="SSF54534">
    <property type="entry name" value="FKBP-like"/>
    <property type="match status" value="1"/>
</dbReference>
<dbReference type="SUPFAM" id="SSF109998">
    <property type="entry name" value="Triger factor/SurA peptide-binding domain-like"/>
    <property type="match status" value="1"/>
</dbReference>
<dbReference type="SUPFAM" id="SSF102735">
    <property type="entry name" value="Trigger factor ribosome-binding domain"/>
    <property type="match status" value="1"/>
</dbReference>
<dbReference type="PROSITE" id="PS50059">
    <property type="entry name" value="FKBP_PPIASE"/>
    <property type="match status" value="1"/>
</dbReference>
<accession>Q1RGS0</accession>
<comment type="function">
    <text evidence="1">Involved in protein export. Acts as a chaperone by maintaining the newly synthesized protein in an open conformation. Functions as a peptidyl-prolyl cis-trans isomerase.</text>
</comment>
<comment type="catalytic activity">
    <reaction evidence="1">
        <text>[protein]-peptidylproline (omega=180) = [protein]-peptidylproline (omega=0)</text>
        <dbReference type="Rhea" id="RHEA:16237"/>
        <dbReference type="Rhea" id="RHEA-COMP:10747"/>
        <dbReference type="Rhea" id="RHEA-COMP:10748"/>
        <dbReference type="ChEBI" id="CHEBI:83833"/>
        <dbReference type="ChEBI" id="CHEBI:83834"/>
        <dbReference type="EC" id="5.2.1.8"/>
    </reaction>
</comment>
<comment type="subcellular location">
    <subcellularLocation>
        <location>Cytoplasm</location>
    </subcellularLocation>
    <text evidence="1">About half TF is bound to the ribosome near the polypeptide exit tunnel while the other half is free in the cytoplasm.</text>
</comment>
<comment type="domain">
    <text evidence="1">Consists of 3 domains; the N-terminus binds the ribosome, the middle domain has PPIase activity, while the C-terminus has intrinsic chaperone activity on its own.</text>
</comment>
<comment type="similarity">
    <text evidence="1">Belongs to the FKBP-type PPIase family. Tig subfamily.</text>
</comment>
<organism>
    <name type="scientific">Rickettsia bellii (strain RML369-C)</name>
    <dbReference type="NCBI Taxonomy" id="336407"/>
    <lineage>
        <taxon>Bacteria</taxon>
        <taxon>Pseudomonadati</taxon>
        <taxon>Pseudomonadota</taxon>
        <taxon>Alphaproteobacteria</taxon>
        <taxon>Rickettsiales</taxon>
        <taxon>Rickettsiaceae</taxon>
        <taxon>Rickettsieae</taxon>
        <taxon>Rickettsia</taxon>
        <taxon>belli group</taxon>
    </lineage>
</organism>
<name>TIG_RICBR</name>
<protein>
    <recommendedName>
        <fullName evidence="1">Trigger factor</fullName>
        <shortName evidence="1">TF</shortName>
        <ecNumber evidence="1">5.2.1.8</ecNumber>
    </recommendedName>
    <alternativeName>
        <fullName evidence="1">PPIase</fullName>
    </alternativeName>
</protein>
<keyword id="KW-0131">Cell cycle</keyword>
<keyword id="KW-0132">Cell division</keyword>
<keyword id="KW-0143">Chaperone</keyword>
<keyword id="KW-0963">Cytoplasm</keyword>
<keyword id="KW-0413">Isomerase</keyword>
<keyword id="KW-0697">Rotamase</keyword>
<proteinExistence type="inferred from homology"/>
<feature type="chain" id="PRO_0000256608" description="Trigger factor">
    <location>
        <begin position="1"/>
        <end position="445"/>
    </location>
</feature>
<feature type="domain" description="PPIase FKBP-type" evidence="1">
    <location>
        <begin position="162"/>
        <end position="247"/>
    </location>
</feature>
<sequence length="445" mass="50847">MATTILKNEGLDFHIKISTPLSEIDNDIQKELVDLTKKVKIAGFRAGKVPIAIVEKKYGASVRNDIIEKRINDSVNHVIKEHNLNIIGRPKIDDLQNEPNKPLEFTIKMELLPKIDIPDLKKISINRPKLEVSPDDVEEQLKKLAEMMKSYTKESKAKAKDGDQITMDAVGYVKDEAFEGGKLTDFKVVIGSNALIPGFEKQLIGSKAGSEVEVNVTFPENYHAKDLAGKDARFVVQVKAVHTAEPTVIDDEFAKKFQSNSLEELRTHFTKKIENESEEAISTIMKMNLFDQLEKLLDFDVPESLLDQEKNILKSETDKSEQDDSVFKDKSPEQVKEYYDKLALRRVRIGLMLAEYAKDKNLQVEPDDLRRIIMQQARSFPGQENMLFDFYKNNPRAVEQLKGPALEEKAVQHIFDNAVNLKEKKYNRKELEKLLESEEQRITAM</sequence>
<reference key="1">
    <citation type="journal article" date="2006" name="PLoS Genet.">
        <title>Genome sequence of Rickettsia bellii illuminates the role of amoebae in gene exchanges between intracellular pathogens.</title>
        <authorList>
            <person name="Ogata H."/>
            <person name="La Scola B."/>
            <person name="Audic S."/>
            <person name="Renesto P."/>
            <person name="Blanc G."/>
            <person name="Robert C."/>
            <person name="Fournier P.-E."/>
            <person name="Claverie J.-M."/>
            <person name="Raoult D."/>
        </authorList>
    </citation>
    <scope>NUCLEOTIDE SEQUENCE [LARGE SCALE GENOMIC DNA]</scope>
    <source>
        <strain>RML369-C</strain>
    </source>
</reference>
<evidence type="ECO:0000255" key="1">
    <source>
        <dbReference type="HAMAP-Rule" id="MF_00303"/>
    </source>
</evidence>